<keyword id="KW-0963">Cytoplasm</keyword>
<keyword id="KW-0275">Fatty acid biosynthesis</keyword>
<keyword id="KW-0276">Fatty acid metabolism</keyword>
<keyword id="KW-0444">Lipid biosynthesis</keyword>
<keyword id="KW-0443">Lipid metabolism</keyword>
<keyword id="KW-0521">NADP</keyword>
<keyword id="KW-0560">Oxidoreductase</keyword>
<keyword id="KW-0643">Prostaglandin biosynthesis</keyword>
<keyword id="KW-0644">Prostaglandin metabolism</keyword>
<keyword id="KW-1185">Reference proteome</keyword>
<feature type="chain" id="PRO_0000124647" description="Prostaglandin F synthase 2">
    <location>
        <begin position="1"/>
        <end position="323"/>
    </location>
</feature>
<feature type="active site" description="Proton donor" evidence="1">
    <location>
        <position position="55"/>
    </location>
</feature>
<feature type="binding site" evidence="1">
    <location>
        <begin position="20"/>
        <end position="24"/>
    </location>
    <ligand>
        <name>NADP(+)</name>
        <dbReference type="ChEBI" id="CHEBI:58349"/>
    </ligand>
</feature>
<feature type="binding site" evidence="1">
    <location>
        <position position="50"/>
    </location>
    <ligand>
        <name>NADP(+)</name>
        <dbReference type="ChEBI" id="CHEBI:58349"/>
    </ligand>
</feature>
<feature type="binding site" evidence="1">
    <location>
        <position position="117"/>
    </location>
    <ligand>
        <name>substrate</name>
    </ligand>
</feature>
<feature type="binding site" evidence="1">
    <location>
        <begin position="166"/>
        <end position="167"/>
    </location>
    <ligand>
        <name>NADP(+)</name>
        <dbReference type="ChEBI" id="CHEBI:58349"/>
    </ligand>
</feature>
<feature type="binding site" evidence="1">
    <location>
        <position position="190"/>
    </location>
    <ligand>
        <name>NADP(+)</name>
        <dbReference type="ChEBI" id="CHEBI:58349"/>
    </ligand>
</feature>
<feature type="binding site" evidence="1">
    <location>
        <begin position="216"/>
        <end position="221"/>
    </location>
    <ligand>
        <name>NADP(+)</name>
        <dbReference type="ChEBI" id="CHEBI:58349"/>
    </ligand>
</feature>
<feature type="binding site" evidence="1">
    <location>
        <begin position="270"/>
        <end position="280"/>
    </location>
    <ligand>
        <name>NADP(+)</name>
        <dbReference type="ChEBI" id="CHEBI:58349"/>
    </ligand>
</feature>
<feature type="site" description="Lowers pKa of active site Tyr" evidence="1">
    <location>
        <position position="84"/>
    </location>
</feature>
<protein>
    <recommendedName>
        <fullName>Prostaglandin F synthase 2</fullName>
        <shortName>PGF 2</shortName>
        <shortName>PGF synthase 2</shortName>
        <shortName>PGFS2</shortName>
        <ecNumber>1.1.1.188</ecNumber>
    </recommendedName>
    <alternativeName>
        <fullName>Prostaglandin F synthase II</fullName>
        <shortName>PGFSII</shortName>
    </alternativeName>
    <alternativeName>
        <fullName>Prostaglandin-D2 11 reductase 2</fullName>
    </alternativeName>
</protein>
<accession>P52897</accession>
<reference key="1">
    <citation type="journal article" date="1992" name="Biochem. Biophys. Res. Commun.">
        <title>A lung type prostaglandin F synthase is expressed in bovine liver: cDNA sequence and expression in E. coli.</title>
        <authorList>
            <person name="Kuchinke W."/>
            <person name="Barski O."/>
            <person name="Watanabe K."/>
            <person name="Hayaishi O."/>
        </authorList>
    </citation>
    <scope>NUCLEOTIDE SEQUENCE [MRNA]</scope>
    <source>
        <tissue>Liver</tissue>
    </source>
</reference>
<proteinExistence type="evidence at transcript level"/>
<organism>
    <name type="scientific">Bos taurus</name>
    <name type="common">Bovine</name>
    <dbReference type="NCBI Taxonomy" id="9913"/>
    <lineage>
        <taxon>Eukaryota</taxon>
        <taxon>Metazoa</taxon>
        <taxon>Chordata</taxon>
        <taxon>Craniata</taxon>
        <taxon>Vertebrata</taxon>
        <taxon>Euteleostomi</taxon>
        <taxon>Mammalia</taxon>
        <taxon>Eutheria</taxon>
        <taxon>Laurasiatheria</taxon>
        <taxon>Artiodactyla</taxon>
        <taxon>Ruminantia</taxon>
        <taxon>Pecora</taxon>
        <taxon>Bovidae</taxon>
        <taxon>Bovinae</taxon>
        <taxon>Bos</taxon>
    </lineage>
</organism>
<sequence>MDPKSQRVKFNDGHFIPVLGFGTYAPEEVPKSEALEATKFAIEVGFRHVDSAHLYQNEEQVGQAIRSKIADGTVKREDIFYTSKLWCNSLQPELVRPALEKSLQNLQLDYVDLYIIHSPVSLKPGNKFVPKDESGKLIFDSVDLCHTWEALEKCKDAGLTKSIGVSNFNHKQLEKILNKPGLKYKPVCNQVECHPYLNQSKLLEFCKSHDIVLVAYAALGAQLLSEWVNSNNPVLLEDPVLCAIAKKHKQTPALVALRYQVQRGVVVLAKSFNKKRIKENMQVFDFELTPEDMKAIDGLNRNTRYYDFQQGIGHPEYPFSEEY</sequence>
<comment type="function">
    <text>Catalyzes the reduction of PGD(2) and PGH(2) to PGF(2 alpha) and a stereoisomer, respectively. It has a broad substrate specificity and also reduces other carbonyl compounds.</text>
</comment>
<comment type="catalytic activity">
    <reaction>
        <text>prostaglandin F2alpha + NADP(+) = prostaglandin D2 + NADPH + H(+)</text>
        <dbReference type="Rhea" id="RHEA:10140"/>
        <dbReference type="ChEBI" id="CHEBI:15378"/>
        <dbReference type="ChEBI" id="CHEBI:57404"/>
        <dbReference type="ChEBI" id="CHEBI:57406"/>
        <dbReference type="ChEBI" id="CHEBI:57783"/>
        <dbReference type="ChEBI" id="CHEBI:58349"/>
        <dbReference type="EC" id="1.1.1.188"/>
    </reaction>
</comment>
<comment type="pathway">
    <text>Lipid metabolism; prostaglandin biosynthesis.</text>
</comment>
<comment type="subunit">
    <text evidence="1">Monomer.</text>
</comment>
<comment type="subcellular location">
    <subcellularLocation>
        <location>Cytoplasm</location>
    </subcellularLocation>
</comment>
<comment type="similarity">
    <text evidence="2">Belongs to the aldo/keto reductase family.</text>
</comment>
<dbReference type="EC" id="1.1.1.188"/>
<dbReference type="EMBL" id="M86544">
    <property type="protein sequence ID" value="AAA30730.1"/>
    <property type="molecule type" value="mRNA"/>
</dbReference>
<dbReference type="PIR" id="E75572">
    <property type="entry name" value="JH0575"/>
</dbReference>
<dbReference type="SMR" id="P52897"/>
<dbReference type="FunCoup" id="P52897">
    <property type="interactions" value="102"/>
</dbReference>
<dbReference type="STRING" id="9913.ENSBTAP00000024086"/>
<dbReference type="PaxDb" id="9913-ENSBTAP00000024086"/>
<dbReference type="Ensembl" id="ENSBTAT00000024086.6">
    <property type="protein sequence ID" value="ENSBTAP00000024086.5"/>
    <property type="gene ID" value="ENSBTAG00000022570.6"/>
</dbReference>
<dbReference type="VEuPathDB" id="HostDB:ENSBTAG00000022570"/>
<dbReference type="eggNOG" id="KOG1577">
    <property type="taxonomic scope" value="Eukaryota"/>
</dbReference>
<dbReference type="GeneTree" id="ENSGT00940000153677"/>
<dbReference type="HOGENOM" id="CLU_023205_0_0_1"/>
<dbReference type="InParanoid" id="P52897"/>
<dbReference type="OMA" id="WNNYHAK"/>
<dbReference type="TreeFam" id="TF106492"/>
<dbReference type="Reactome" id="R-BTA-193368">
    <property type="pathway name" value="Synthesis of bile acids and bile salts via 7alpha-hydroxycholesterol"/>
</dbReference>
<dbReference type="Reactome" id="R-BTA-193775">
    <property type="pathway name" value="Synthesis of bile acids and bile salts via 24-hydroxycholesterol"/>
</dbReference>
<dbReference type="Reactome" id="R-BTA-193807">
    <property type="pathway name" value="Synthesis of bile acids and bile salts via 27-hydroxycholesterol"/>
</dbReference>
<dbReference type="Reactome" id="R-BTA-2162123">
    <property type="pathway name" value="Synthesis of Prostaglandins (PG) and Thromboxanes (TX)"/>
</dbReference>
<dbReference type="Reactome" id="R-BTA-5365859">
    <property type="pathway name" value="RA biosynthesis pathway"/>
</dbReference>
<dbReference type="Reactome" id="R-BTA-975634">
    <property type="pathway name" value="Retinoid metabolism and transport"/>
</dbReference>
<dbReference type="Reactome" id="R-BTA-9757110">
    <property type="pathway name" value="Prednisone ADME"/>
</dbReference>
<dbReference type="SABIO-RK" id="P52897"/>
<dbReference type="UniPathway" id="UPA00662"/>
<dbReference type="Proteomes" id="UP000009136">
    <property type="component" value="Chromosome 13"/>
</dbReference>
<dbReference type="Bgee" id="ENSBTAG00000022570">
    <property type="expression patterns" value="Expressed in lung and 85 other cell types or tissues"/>
</dbReference>
<dbReference type="GO" id="GO:0005829">
    <property type="term" value="C:cytosol"/>
    <property type="evidence" value="ECO:0000318"/>
    <property type="project" value="GO_Central"/>
</dbReference>
<dbReference type="GO" id="GO:0004032">
    <property type="term" value="F:aldose reductase (NADPH) activity"/>
    <property type="evidence" value="ECO:0000318"/>
    <property type="project" value="GO_Central"/>
</dbReference>
<dbReference type="GO" id="GO:0047086">
    <property type="term" value="F:ketosteroid monooxygenase activity"/>
    <property type="evidence" value="ECO:0000318"/>
    <property type="project" value="GO_Central"/>
</dbReference>
<dbReference type="GO" id="GO:0047017">
    <property type="term" value="F:prostaglandin F synthase activity"/>
    <property type="evidence" value="ECO:0007669"/>
    <property type="project" value="UniProtKB-EC"/>
</dbReference>
<dbReference type="GO" id="GO:0016229">
    <property type="term" value="F:steroid dehydrogenase activity"/>
    <property type="evidence" value="ECO:0000318"/>
    <property type="project" value="GO_Central"/>
</dbReference>
<dbReference type="GO" id="GO:0001516">
    <property type="term" value="P:prostaglandin biosynthetic process"/>
    <property type="evidence" value="ECO:0007669"/>
    <property type="project" value="UniProtKB-UniPathway"/>
</dbReference>
<dbReference type="GO" id="GO:0008202">
    <property type="term" value="P:steroid metabolic process"/>
    <property type="evidence" value="ECO:0000318"/>
    <property type="project" value="GO_Central"/>
</dbReference>
<dbReference type="CDD" id="cd19108">
    <property type="entry name" value="AKR_AKR1C1-35"/>
    <property type="match status" value="1"/>
</dbReference>
<dbReference type="FunFam" id="3.20.20.100:FF:000003">
    <property type="entry name" value="Aldo-keto reductase family 1 member C3"/>
    <property type="match status" value="1"/>
</dbReference>
<dbReference type="Gene3D" id="3.20.20.100">
    <property type="entry name" value="NADP-dependent oxidoreductase domain"/>
    <property type="match status" value="1"/>
</dbReference>
<dbReference type="InterPro" id="IPR020471">
    <property type="entry name" value="AKR"/>
</dbReference>
<dbReference type="InterPro" id="IPR044482">
    <property type="entry name" value="AKR1C"/>
</dbReference>
<dbReference type="InterPro" id="IPR018170">
    <property type="entry name" value="Aldo/ket_reductase_CS"/>
</dbReference>
<dbReference type="InterPro" id="IPR023210">
    <property type="entry name" value="NADP_OxRdtase_dom"/>
</dbReference>
<dbReference type="InterPro" id="IPR036812">
    <property type="entry name" value="NADP_OxRdtase_dom_sf"/>
</dbReference>
<dbReference type="PANTHER" id="PTHR11732">
    <property type="entry name" value="ALDO/KETO REDUCTASE"/>
    <property type="match status" value="1"/>
</dbReference>
<dbReference type="Pfam" id="PF00248">
    <property type="entry name" value="Aldo_ket_red"/>
    <property type="match status" value="1"/>
</dbReference>
<dbReference type="PIRSF" id="PIRSF000097">
    <property type="entry name" value="AKR"/>
    <property type="match status" value="1"/>
</dbReference>
<dbReference type="PRINTS" id="PR00069">
    <property type="entry name" value="ALDKETRDTASE"/>
</dbReference>
<dbReference type="SUPFAM" id="SSF51430">
    <property type="entry name" value="NAD(P)-linked oxidoreductase"/>
    <property type="match status" value="1"/>
</dbReference>
<dbReference type="PROSITE" id="PS00798">
    <property type="entry name" value="ALDOKETO_REDUCTASE_1"/>
    <property type="match status" value="1"/>
</dbReference>
<dbReference type="PROSITE" id="PS00062">
    <property type="entry name" value="ALDOKETO_REDUCTASE_2"/>
    <property type="match status" value="1"/>
</dbReference>
<dbReference type="PROSITE" id="PS00063">
    <property type="entry name" value="ALDOKETO_REDUCTASE_3"/>
    <property type="match status" value="1"/>
</dbReference>
<evidence type="ECO:0000250" key="1"/>
<evidence type="ECO:0000305" key="2"/>
<name>PGFS2_BOVIN</name>